<evidence type="ECO:0000255" key="1">
    <source>
        <dbReference type="PROSITE-ProRule" id="PRU00405"/>
    </source>
</evidence>
<evidence type="ECO:0000269" key="2">
    <source>
    </source>
</evidence>
<evidence type="ECO:0000269" key="3">
    <source>
    </source>
</evidence>
<evidence type="ECO:0000269" key="4">
    <source>
    </source>
</evidence>
<evidence type="ECO:0000269" key="5">
    <source>
    </source>
</evidence>
<evidence type="ECO:0000303" key="6">
    <source>
    </source>
</evidence>
<evidence type="ECO:0000305" key="7"/>
<evidence type="ECO:0000305" key="8">
    <source>
    </source>
</evidence>
<evidence type="ECO:0000312" key="9">
    <source>
        <dbReference type="EMBL" id="AAA03713.1"/>
    </source>
</evidence>
<evidence type="ECO:0000312" key="10">
    <source>
        <dbReference type="EMBL" id="JHRW01000018"/>
    </source>
</evidence>
<organism>
    <name type="scientific">Escherichia coli</name>
    <dbReference type="NCBI Taxonomy" id="562"/>
    <lineage>
        <taxon>Bacteria</taxon>
        <taxon>Pseudomonadati</taxon>
        <taxon>Pseudomonadota</taxon>
        <taxon>Gammaproteobacteria</taxon>
        <taxon>Enterobacterales</taxon>
        <taxon>Enterobacteriaceae</taxon>
        <taxon>Escherichia</taxon>
    </lineage>
</organism>
<keyword id="KW-0051">Antiviral defense</keyword>
<keyword id="KW-0460">Magnesium</keyword>
<keyword id="KW-0479">Metal-binding</keyword>
<keyword id="KW-0548">Nucleotidyltransferase</keyword>
<keyword id="KW-0694">RNA-binding</keyword>
<keyword id="KW-0695">RNA-directed DNA polymerase</keyword>
<keyword id="KW-0808">Transferase</keyword>
<sequence length="311" mass="35503">MSVIRRLAAVLRQSDSGISAFLVTAPRKYKVYKIPKRTTGFRVIAQPAKGLKDIQRAFVQLYNFPVHDASMAYMKGKGIRDNAAAHAGNQYLLKADLEDFFNSITPAIFWRCIEMSSALTPQFEPQDKFFIEKILFWQPIKHRKTKLILSVGAPSSPVISNFCMYEFDNRIHAACNKLEITYTRYADDLTFSCNIPNVLKAVPSTIEALLKDLFGSELRLNHSKTVFSSKAHNRHVTGVTINNEETLSLGRDRKRFIKHLINQYKYGLLDNEDKAYLTGLLAFASHIEPGFITRMNEKYSLELMGRLRGQR</sequence>
<dbReference type="EC" id="2.7.7.49" evidence="1 8"/>
<dbReference type="EMBL" id="U02551">
    <property type="protein sequence ID" value="AAA03713.1"/>
    <property type="status" value="ALT_FRAME"/>
    <property type="molecule type" value="Genomic_DNA"/>
</dbReference>
<dbReference type="EMBL" id="JHRW01000018">
    <property type="status" value="NOT_ANNOTATED_CDS"/>
    <property type="molecule type" value="Genomic_DNA"/>
</dbReference>
<dbReference type="RefSeq" id="WP_028120276.1">
    <property type="nucleotide sequence ID" value="NZ_CABEEY010000003.1"/>
</dbReference>
<dbReference type="SMR" id="Q46666"/>
<dbReference type="GO" id="GO:0046872">
    <property type="term" value="F:metal ion binding"/>
    <property type="evidence" value="ECO:0007669"/>
    <property type="project" value="UniProtKB-KW"/>
</dbReference>
<dbReference type="GO" id="GO:0003723">
    <property type="term" value="F:RNA binding"/>
    <property type="evidence" value="ECO:0007669"/>
    <property type="project" value="UniProtKB-KW"/>
</dbReference>
<dbReference type="GO" id="GO:0003964">
    <property type="term" value="F:RNA-directed DNA polymerase activity"/>
    <property type="evidence" value="ECO:0007669"/>
    <property type="project" value="UniProtKB-KW"/>
</dbReference>
<dbReference type="GO" id="GO:0051607">
    <property type="term" value="P:defense response to virus"/>
    <property type="evidence" value="ECO:0007669"/>
    <property type="project" value="UniProtKB-KW"/>
</dbReference>
<dbReference type="CDD" id="cd03487">
    <property type="entry name" value="RT_Bac_retron_II"/>
    <property type="match status" value="1"/>
</dbReference>
<dbReference type="InterPro" id="IPR043502">
    <property type="entry name" value="DNA/RNA_pol_sf"/>
</dbReference>
<dbReference type="InterPro" id="IPR051083">
    <property type="entry name" value="GrpII_Intron_Splice-Mob/Def"/>
</dbReference>
<dbReference type="InterPro" id="IPR000123">
    <property type="entry name" value="Reverse_transcriptase_msDNA"/>
</dbReference>
<dbReference type="InterPro" id="IPR000477">
    <property type="entry name" value="RT_dom"/>
</dbReference>
<dbReference type="NCBIfam" id="NF038233">
    <property type="entry name" value="retron_St85_RT"/>
    <property type="match status" value="1"/>
</dbReference>
<dbReference type="PANTHER" id="PTHR34047">
    <property type="entry name" value="NUCLEAR INTRON MATURASE 1, MITOCHONDRIAL-RELATED"/>
    <property type="match status" value="1"/>
</dbReference>
<dbReference type="PANTHER" id="PTHR34047:SF7">
    <property type="entry name" value="RNA-DIRECTED DNA POLYMERASE"/>
    <property type="match status" value="1"/>
</dbReference>
<dbReference type="Pfam" id="PF00078">
    <property type="entry name" value="RVT_1"/>
    <property type="match status" value="1"/>
</dbReference>
<dbReference type="PRINTS" id="PR00866">
    <property type="entry name" value="RNADNAPOLMS"/>
</dbReference>
<dbReference type="SUPFAM" id="SSF56672">
    <property type="entry name" value="DNA/RNA polymerases"/>
    <property type="match status" value="1"/>
</dbReference>
<dbReference type="PROSITE" id="PS50878">
    <property type="entry name" value="RT_POL"/>
    <property type="match status" value="1"/>
</dbReference>
<gene>
    <name evidence="6" type="primary">ret</name>
    <name type="ORF">Ga0100609_101822</name>
</gene>
<comment type="function">
    <text evidence="2 3 4 5 8">Reverse transcriptase (RT) component of antiviral defense system retron Ec78, composed of a non-coding RNA (ncRNA), this reverse transcriptase (RT), a probable ATPase and a putative HNH endonuclease. Expression of retron Ec78 confers protection against bacteriophage T5. At multiplicity of infection (MOI) of 0.02 cultures slow growth when infected with T5 but do not collapse, at MOI 2 cultures enter growth stasis (PubMed:33157039). Responsible for synthesis of msDNA-Ec78 (a linear ssDNA with a 5'-terminal phosphate residue). Unlike most known msDNAs the mature product does not have an RNA component. The retron transcript serves as primer and template for the reaction, and codes for the RT. Not mutagenic when cloned in E.coli (PubMed:9281493). It is thought to be synthesized as a branched RNA with a 2',5'-phosphodiester linkage to ssDNA; the linkage is cleaved endonucleolytically by ExoVII (xseA-xseB) leaving the observed mature 5'-ssDNA terminus (Probable) (PubMed:26626352). Overexpression of the ncRNA and RT, which leads to increased levels of msDNA, is not mutagenic in vivo. As the stem in the msDNA does not have a mismatch it probably does not bind or sequester MutS and/or MutL (PubMed:7885227).</text>
</comment>
<comment type="catalytic activity">
    <reaction evidence="1 8">
        <text>DNA(n) + a 2'-deoxyribonucleoside 5'-triphosphate = DNA(n+1) + diphosphate</text>
        <dbReference type="Rhea" id="RHEA:22508"/>
        <dbReference type="Rhea" id="RHEA-COMP:17339"/>
        <dbReference type="Rhea" id="RHEA-COMP:17340"/>
        <dbReference type="ChEBI" id="CHEBI:33019"/>
        <dbReference type="ChEBI" id="CHEBI:61560"/>
        <dbReference type="ChEBI" id="CHEBI:173112"/>
        <dbReference type="EC" id="2.7.7.49"/>
    </reaction>
</comment>
<comment type="similarity">
    <text evidence="7">Belongs to the bacterial reverse transcriptase family.</text>
</comment>
<comment type="sequence caution" evidence="7">
    <conflict type="frameshift">
        <sequence resource="EMBL-CDS" id="AAA03713"/>
    </conflict>
</comment>
<reference evidence="9" key="1">
    <citation type="journal article" date="1997" name="Plasmid">
        <title>A novel retron that produces RNA-less msDNA in Escherichia coli using reverse transcriptase.</title>
        <authorList>
            <person name="Lima T.M."/>
            <person name="Lim D."/>
        </authorList>
    </citation>
    <scope>NUCLEOTIDE SEQUENCE [GENOMIC DNA]</scope>
    <scope>PROBABLE FUNCTION</scope>
    <source>
        <strain>Clinical strain 110</strain>
    </source>
</reference>
<reference evidence="10" key="2">
    <citation type="submission" date="2015-08" db="EMBL/GenBank/DDBJ databases">
        <title>Emergence of novel diverse phylogenomic lineages of EPEC.</title>
        <authorList>
            <person name="Hazen T.H."/>
            <person name="Donnenberg M."/>
            <person name="Nataro J."/>
            <person name="Kaper J."/>
            <person name="Rasko D."/>
        </authorList>
    </citation>
    <scope>NUCLEOTIDE SEQUENCE [LARGE SCALE GENOMIC DNA]</scope>
    <source>
        <strain>102598</strain>
    </source>
</reference>
<reference key="3">
    <citation type="journal article" date="1994" name="Mol. Microbiol.">
        <title>Multicopy single-stranded DNAs with mismatched base pairs are mutagenic in Escherichia coli.</title>
        <authorList>
            <person name="Maas W.K."/>
            <person name="Wang C."/>
            <person name="Lima T."/>
            <person name="Zubay G."/>
            <person name="Lim D."/>
        </authorList>
    </citation>
    <scope>FUNCTION</scope>
    <source>
        <strain>Clinical strain 110</strain>
    </source>
</reference>
<reference key="4">
    <citation type="journal article" date="2015" name="J. Microbiol.">
        <title>Characterization of cell death in Escherichia coli mediated by XseA, a large subunit of exonuclease VII.</title>
        <authorList>
            <person name="Jung H."/>
            <person name="Liang J."/>
            <person name="Jung Y."/>
            <person name="Lim D."/>
        </authorList>
    </citation>
    <scope>MSDNA MATURATION BY EXOVII</scope>
</reference>
<reference key="5">
    <citation type="journal article" date="2020" name="Cell">
        <title>Bacterial Retrons Function In Anti-Phage Defense.</title>
        <authorList>
            <person name="Millman A."/>
            <person name="Bernheim A."/>
            <person name="Stokar-Avihail A."/>
            <person name="Fedorenko T."/>
            <person name="Voichek M."/>
            <person name="Leavitt A."/>
            <person name="Oppenheimer-Shaanan Y."/>
            <person name="Sorek R."/>
        </authorList>
    </citation>
    <scope>FUNCTION IN ANTIVIRAL DEFENSE</scope>
    <scope>IDENTIFICATION AS A RETRON</scope>
    <source>
        <strain>102598</strain>
    </source>
</reference>
<name>RT78_ECOLX</name>
<feature type="chain" id="PRO_0000456019" description="Retron Ec78 reverse transcriptase">
    <location>
        <begin position="1"/>
        <end position="311"/>
    </location>
</feature>
<feature type="domain" description="Reverse transcriptase" evidence="1">
    <location>
        <begin position="15"/>
        <end position="241"/>
    </location>
</feature>
<feature type="binding site" evidence="1">
    <location>
        <position position="96"/>
    </location>
    <ligand>
        <name>Mg(2+)</name>
        <dbReference type="ChEBI" id="CHEBI:18420"/>
        <note>catalytic</note>
    </ligand>
</feature>
<feature type="binding site" evidence="1">
    <location>
        <position position="187"/>
    </location>
    <ligand>
        <name>Mg(2+)</name>
        <dbReference type="ChEBI" id="CHEBI:18420"/>
        <note>catalytic</note>
    </ligand>
</feature>
<feature type="binding site" evidence="1">
    <location>
        <position position="188"/>
    </location>
    <ligand>
        <name>Mg(2+)</name>
        <dbReference type="ChEBI" id="CHEBI:18420"/>
        <note>catalytic</note>
    </ligand>
</feature>
<feature type="sequence conflict" description="In Ref. 1; AAA03713." evidence="7" ref="1">
    <original>DKAYLTGLLAF</original>
    <variation>KLSDRLLAL</variation>
    <location>
        <begin position="273"/>
        <end position="283"/>
    </location>
</feature>
<proteinExistence type="evidence at protein level"/>
<accession>Q46666</accession>
<protein>
    <recommendedName>
        <fullName evidence="6">Retron Ec78 reverse transcriptase</fullName>
        <shortName evidence="6">RT</shortName>
        <ecNumber evidence="1 8">2.7.7.49</ecNumber>
    </recommendedName>
</protein>